<proteinExistence type="inferred from homology"/>
<name>BPI_BPP2</name>
<reference key="1">
    <citation type="journal article" date="1992" name="J. Bacteriol.">
        <title>DNA sequences of the tail fiber genes of bacteriophage P2: evidence for horizontal transfer of tail fiber genes among unrelated bacteriophages.</title>
        <authorList>
            <person name="Haggaard-Ljungquist E."/>
            <person name="Halling C."/>
            <person name="Calendar R."/>
        </authorList>
    </citation>
    <scope>NUCLEOTIDE SEQUENCE [GENOMIC DNA]</scope>
    <scope>FUNCTION</scope>
    <scope>SUBCELLULAR LOCATION</scope>
</reference>
<reference key="2">
    <citation type="journal article" date="1995" name="Virology">
        <title>Bacteriophage P2: genes involved in baseplate assembly.</title>
        <authorList>
            <person name="Haggaard-Ljungquist E."/>
            <person name="Jacobsen E."/>
            <person name="Rishovd S."/>
            <person name="Six E.W."/>
            <person name="Nilssen O."/>
            <person name="Sunshine M.G."/>
            <person name="Lindqvist B.H."/>
            <person name="Kim K.-J."/>
            <person name="Barreiro V."/>
            <person name="Koonin E.V."/>
            <person name="Calendar R."/>
        </authorList>
    </citation>
    <scope>NUCLEOTIDE SEQUENCE [GENOMIC DNA]</scope>
</reference>
<reference key="3">
    <citation type="journal article" date="2012" name="Adv. Exp. Med. Biol.">
        <title>Contractile tail machines of bacteriophages.</title>
        <authorList>
            <person name="Leiman P.G."/>
            <person name="Shneider M.M."/>
        </authorList>
    </citation>
    <scope>REVIEW ON FUNCTION</scope>
</reference>
<feature type="chain" id="PRO_0000165253" description="Baseplate protein I">
    <location>
        <begin position="1"/>
        <end position="176"/>
    </location>
</feature>
<gene>
    <name type="primary">I</name>
</gene>
<organism>
    <name type="scientific">Escherichia phage P2</name>
    <name type="common">Bacteriophage P2</name>
    <dbReference type="NCBI Taxonomy" id="2905681"/>
    <lineage>
        <taxon>Viruses</taxon>
        <taxon>Duplodnaviria</taxon>
        <taxon>Heunggongvirae</taxon>
        <taxon>Uroviricota</taxon>
        <taxon>Caudoviricetes</taxon>
        <taxon>Peduoviridae</taxon>
        <taxon>Peduovirus</taxon>
        <taxon>Peduovirus P2</taxon>
    </lineage>
</organism>
<dbReference type="EMBL" id="AF063097">
    <property type="protein sequence ID" value="AAD03285.1"/>
    <property type="molecule type" value="Genomic_DNA"/>
</dbReference>
<dbReference type="PIR" id="A42291">
    <property type="entry name" value="A42291"/>
</dbReference>
<dbReference type="RefSeq" id="NP_046774.1">
    <property type="nucleotide sequence ID" value="NC_001895.1"/>
</dbReference>
<dbReference type="SMR" id="P26701"/>
<dbReference type="GeneID" id="77440809"/>
<dbReference type="KEGG" id="vg:77440809"/>
<dbReference type="Proteomes" id="UP000009092">
    <property type="component" value="Genome"/>
</dbReference>
<dbReference type="GO" id="GO:0098025">
    <property type="term" value="C:virus tail, baseplate"/>
    <property type="evidence" value="ECO:0007669"/>
    <property type="project" value="UniProtKB-KW"/>
</dbReference>
<dbReference type="GO" id="GO:0098003">
    <property type="term" value="P:viral tail assembly"/>
    <property type="evidence" value="ECO:0007669"/>
    <property type="project" value="UniProtKB-KW"/>
</dbReference>
<dbReference type="InterPro" id="IPR006521">
    <property type="entry name" value="Tail_protein_I"/>
</dbReference>
<dbReference type="NCBIfam" id="TIGR01634">
    <property type="entry name" value="tail_P2_I"/>
    <property type="match status" value="1"/>
</dbReference>
<dbReference type="Pfam" id="PF09684">
    <property type="entry name" value="Tail_P2_I"/>
    <property type="match status" value="1"/>
</dbReference>
<keyword id="KW-0426">Late protein</keyword>
<keyword id="KW-1185">Reference proteome</keyword>
<keyword id="KW-1226">Viral baseplate protein</keyword>
<keyword id="KW-1188">Viral release from host cell</keyword>
<keyword id="KW-1245">Viral tail assembly</keyword>
<keyword id="KW-1227">Viral tail protein</keyword>
<keyword id="KW-0946">Virion</keyword>
<organismHost>
    <name type="scientific">Enterobacteriaceae</name>
    <dbReference type="NCBI Taxonomy" id="543"/>
</organismHost>
<evidence type="ECO:0000269" key="1">
    <source>
    </source>
</evidence>
<evidence type="ECO:0000269" key="2">
    <source>
    </source>
</evidence>
<evidence type="ECO:0000303" key="3">
    <source>
    </source>
</evidence>
<evidence type="ECO:0000305" key="4"/>
<comment type="function">
    <text evidence="1 2 3">Baseplate protein that may be part of the wedges of the baseplate. Plays a role in tail assembly.</text>
</comment>
<comment type="subcellular location">
    <subcellularLocation>
        <location evidence="2">Virion</location>
    </subcellularLocation>
    <text evidence="2">Part of the baseplate.</text>
</comment>
<comment type="induction">
    <text evidence="4">Expressed in the late phase of the viral replicative cycle.</text>
</comment>
<comment type="similarity">
    <text evidence="4">Belongs to the P2likevirus gpI protein family.</text>
</comment>
<accession>P26701</accession>
<sequence length="176" mass="19584">MSDSRLLPTGSSPLEVAAAKACAEIEKTPVSIRELWNPDTCPANLLPWLAWAFSVDRWDEKWPEATKRAVIRDAYFIHCHKGTIGAIRRVVEPLGYLINVTEWWENSDPPGTFRLDIGVLESGITEAMYQEMERLIADAKPASRHLIGLNITRDIPGYLFAGGVAYDGDVITVYPG</sequence>
<protein>
    <recommendedName>
        <fullName evidence="4">Baseplate protein I</fullName>
    </recommendedName>
    <alternativeName>
        <fullName evidence="4">Gene I protein</fullName>
        <shortName>GpI</shortName>
    </alternativeName>
</protein>